<name>ITA8_MOUSE</name>
<feature type="signal peptide" evidence="3">
    <location>
        <begin position="1"/>
        <end position="35"/>
    </location>
</feature>
<feature type="chain" id="PRO_0000297709" description="Integrin alpha-8">
    <location>
        <begin position="36"/>
        <end position="1062"/>
    </location>
</feature>
<feature type="chain" id="PRO_0000297710" description="Integrin alpha-8 heavy chain" evidence="3">
    <location>
        <begin position="38"/>
        <end position="905"/>
    </location>
</feature>
<feature type="chain" id="PRO_0000297711" description="Integrin alpha-8 light chain" evidence="3">
    <location>
        <begin position="906"/>
        <end position="1062"/>
    </location>
</feature>
<feature type="topological domain" description="Extracellular" evidence="3">
    <location>
        <begin position="36"/>
        <end position="1010"/>
    </location>
</feature>
<feature type="transmembrane region" description="Helical" evidence="3">
    <location>
        <begin position="1011"/>
        <end position="1031"/>
    </location>
</feature>
<feature type="topological domain" description="Cytoplasmic" evidence="3">
    <location>
        <begin position="1032"/>
        <end position="1062"/>
    </location>
</feature>
<feature type="repeat" description="FG-GAP 1" evidence="4">
    <location>
        <begin position="41"/>
        <end position="104"/>
    </location>
</feature>
<feature type="repeat" description="FG-GAP 2" evidence="4">
    <location>
        <begin position="121"/>
        <end position="182"/>
    </location>
</feature>
<feature type="repeat" description="FG-GAP 3" evidence="4">
    <location>
        <begin position="187"/>
        <end position="239"/>
    </location>
</feature>
<feature type="repeat" description="FG-GAP 4" evidence="4">
    <location>
        <begin position="252"/>
        <end position="305"/>
    </location>
</feature>
<feature type="repeat" description="FG-GAP 5" evidence="4">
    <location>
        <begin position="306"/>
        <end position="371"/>
    </location>
</feature>
<feature type="repeat" description="FG-GAP 6" evidence="4">
    <location>
        <begin position="372"/>
        <end position="430"/>
    </location>
</feature>
<feature type="repeat" description="FG-GAP 7" evidence="4">
    <location>
        <begin position="434"/>
        <end position="497"/>
    </location>
</feature>
<feature type="short sequence motif" description="Cell attachment site" evidence="3">
    <location>
        <begin position="454"/>
        <end position="456"/>
    </location>
</feature>
<feature type="binding site" evidence="2">
    <location>
        <position position="274"/>
    </location>
    <ligand>
        <name>Ca(2+)</name>
        <dbReference type="ChEBI" id="CHEBI:29108"/>
        <label>1</label>
    </ligand>
</feature>
<feature type="binding site" evidence="2">
    <location>
        <position position="276"/>
    </location>
    <ligand>
        <name>Ca(2+)</name>
        <dbReference type="ChEBI" id="CHEBI:29108"/>
        <label>1</label>
    </ligand>
</feature>
<feature type="binding site" evidence="2">
    <location>
        <position position="278"/>
    </location>
    <ligand>
        <name>Ca(2+)</name>
        <dbReference type="ChEBI" id="CHEBI:29108"/>
        <label>1</label>
    </ligand>
</feature>
<feature type="binding site" evidence="2">
    <location>
        <position position="282"/>
    </location>
    <ligand>
        <name>Ca(2+)</name>
        <dbReference type="ChEBI" id="CHEBI:29108"/>
        <label>1</label>
    </ligand>
</feature>
<feature type="binding site" evidence="2">
    <location>
        <position position="328"/>
    </location>
    <ligand>
        <name>Ca(2+)</name>
        <dbReference type="ChEBI" id="CHEBI:29108"/>
        <label>2</label>
    </ligand>
</feature>
<feature type="binding site" evidence="2">
    <location>
        <position position="330"/>
    </location>
    <ligand>
        <name>Ca(2+)</name>
        <dbReference type="ChEBI" id="CHEBI:29108"/>
        <label>2</label>
    </ligand>
</feature>
<feature type="binding site" evidence="2">
    <location>
        <position position="332"/>
    </location>
    <ligand>
        <name>Ca(2+)</name>
        <dbReference type="ChEBI" id="CHEBI:29108"/>
        <label>2</label>
    </ligand>
</feature>
<feature type="binding site" evidence="2">
    <location>
        <position position="336"/>
    </location>
    <ligand>
        <name>Ca(2+)</name>
        <dbReference type="ChEBI" id="CHEBI:29108"/>
        <label>2</label>
    </ligand>
</feature>
<feature type="binding site" evidence="2">
    <location>
        <position position="394"/>
    </location>
    <ligand>
        <name>Ca(2+)</name>
        <dbReference type="ChEBI" id="CHEBI:29108"/>
        <label>3</label>
    </ligand>
</feature>
<feature type="binding site" evidence="2">
    <location>
        <position position="396"/>
    </location>
    <ligand>
        <name>Ca(2+)</name>
        <dbReference type="ChEBI" id="CHEBI:29108"/>
        <label>3</label>
    </ligand>
</feature>
<feature type="binding site" evidence="2">
    <location>
        <position position="398"/>
    </location>
    <ligand>
        <name>Ca(2+)</name>
        <dbReference type="ChEBI" id="CHEBI:29108"/>
        <label>3</label>
    </ligand>
</feature>
<feature type="binding site" evidence="2">
    <location>
        <position position="400"/>
    </location>
    <ligand>
        <name>Ca(2+)</name>
        <dbReference type="ChEBI" id="CHEBI:29108"/>
        <label>3</label>
    </ligand>
</feature>
<feature type="binding site" evidence="2">
    <location>
        <position position="402"/>
    </location>
    <ligand>
        <name>Ca(2+)</name>
        <dbReference type="ChEBI" id="CHEBI:29108"/>
        <label>3</label>
    </ligand>
</feature>
<feature type="binding site" evidence="2">
    <location>
        <position position="458"/>
    </location>
    <ligand>
        <name>Ca(2+)</name>
        <dbReference type="ChEBI" id="CHEBI:29108"/>
        <label>4</label>
    </ligand>
</feature>
<feature type="binding site" evidence="2">
    <location>
        <position position="460"/>
    </location>
    <ligand>
        <name>Ca(2+)</name>
        <dbReference type="ChEBI" id="CHEBI:29108"/>
        <label>4</label>
    </ligand>
</feature>
<feature type="binding site" evidence="2">
    <location>
        <position position="462"/>
    </location>
    <ligand>
        <name>Ca(2+)</name>
        <dbReference type="ChEBI" id="CHEBI:29108"/>
        <label>4</label>
    </ligand>
</feature>
<feature type="binding site" evidence="2">
    <location>
        <position position="464"/>
    </location>
    <ligand>
        <name>Ca(2+)</name>
        <dbReference type="ChEBI" id="CHEBI:29108"/>
        <label>4</label>
    </ligand>
</feature>
<feature type="binding site" evidence="2">
    <location>
        <position position="466"/>
    </location>
    <ligand>
        <name>Ca(2+)</name>
        <dbReference type="ChEBI" id="CHEBI:29108"/>
        <label>4</label>
    </ligand>
</feature>
<feature type="glycosylation site" description="N-linked (GlcNAc...) asparagine" evidence="3">
    <location>
        <position position="80"/>
    </location>
</feature>
<feature type="glycosylation site" description="N-linked (GlcNAc...) asparagine" evidence="3">
    <location>
        <position position="121"/>
    </location>
</feature>
<feature type="glycosylation site" description="N-linked (GlcNAc...) asparagine" evidence="3">
    <location>
        <position position="176"/>
    </location>
</feature>
<feature type="glycosylation site" description="N-linked (GlcNAc...) asparagine" evidence="3">
    <location>
        <position position="238"/>
    </location>
</feature>
<feature type="glycosylation site" description="N-linked (GlcNAc...) asparagine" evidence="3">
    <location>
        <position position="301"/>
    </location>
</feature>
<feature type="glycosylation site" description="N-linked (GlcNAc...) asparagine" evidence="3">
    <location>
        <position position="310"/>
    </location>
</feature>
<feature type="glycosylation site" description="N-linked (GlcNAc...) asparagine" evidence="3">
    <location>
        <position position="503"/>
    </location>
</feature>
<feature type="glycosylation site" description="N-linked (GlcNAc...) asparagine" evidence="3">
    <location>
        <position position="600"/>
    </location>
</feature>
<feature type="glycosylation site" description="N-linked (GlcNAc...) asparagine" evidence="3">
    <location>
        <position position="604"/>
    </location>
</feature>
<feature type="glycosylation site" description="N-linked (GlcNAc...) asparagine" evidence="3">
    <location>
        <position position="718"/>
    </location>
</feature>
<feature type="glycosylation site" description="N-linked (GlcNAc...) asparagine" evidence="3">
    <location>
        <position position="736"/>
    </location>
</feature>
<feature type="glycosylation site" description="N-linked (GlcNAc...) asparagine" evidence="3">
    <location>
        <position position="752"/>
    </location>
</feature>
<feature type="glycosylation site" description="N-linked (GlcNAc...) asparagine" evidence="3">
    <location>
        <position position="779"/>
    </location>
</feature>
<feature type="glycosylation site" description="N-linked (GlcNAc...) asparagine" evidence="3">
    <location>
        <position position="895"/>
    </location>
</feature>
<feature type="glycosylation site" description="N-linked (GlcNAc...) asparagine" evidence="3">
    <location>
        <position position="922"/>
    </location>
</feature>
<feature type="glycosylation site" description="N-linked (GlcNAc...) asparagine" evidence="3">
    <location>
        <position position="1004"/>
    </location>
</feature>
<feature type="disulfide bond" evidence="1">
    <location>
        <begin position="95"/>
        <end position="105"/>
    </location>
</feature>
<feature type="disulfide bond" evidence="1">
    <location>
        <begin position="149"/>
        <end position="170"/>
    </location>
</feature>
<feature type="disulfide bond" evidence="1">
    <location>
        <begin position="186"/>
        <end position="199"/>
    </location>
</feature>
<feature type="disulfide bond" evidence="1">
    <location>
        <begin position="506"/>
        <end position="517"/>
    </location>
</feature>
<feature type="disulfide bond" evidence="1">
    <location>
        <begin position="523"/>
        <end position="579"/>
    </location>
</feature>
<feature type="disulfide bond" evidence="1">
    <location>
        <begin position="640"/>
        <end position="646"/>
    </location>
</feature>
<feature type="disulfide bond" evidence="1">
    <location>
        <begin position="712"/>
        <end position="725"/>
    </location>
</feature>
<feature type="disulfide bond" description="Interchain (between heavy and light chains)" evidence="1">
    <location>
        <begin position="866"/>
        <end position="923"/>
    </location>
</feature>
<feature type="disulfide bond" evidence="1">
    <location>
        <begin position="928"/>
        <end position="933"/>
    </location>
</feature>
<feature type="splice variant" id="VSP_027364" description="In isoform 2." evidence="16">
    <original>ELVAG</original>
    <variation>GQRHP</variation>
    <location>
        <begin position="282"/>
        <end position="286"/>
    </location>
</feature>
<feature type="splice variant" id="VSP_027365" description="In isoform 2." evidence="16">
    <location>
        <begin position="287"/>
        <end position="1062"/>
    </location>
</feature>
<feature type="sequence conflict" description="In Ref. 1; BAE22455." evidence="17" ref="1">
    <original>D</original>
    <variation>G</variation>
    <location>
        <position position="66"/>
    </location>
</feature>
<protein>
    <recommendedName>
        <fullName>Integrin alpha-8</fullName>
    </recommendedName>
    <component>
        <recommendedName>
            <fullName>Integrin alpha-8 heavy chain</fullName>
        </recommendedName>
    </component>
    <component>
        <recommendedName>
            <fullName>Integrin alpha-8 light chain</fullName>
        </recommendedName>
    </component>
</protein>
<keyword id="KW-0025">Alternative splicing</keyword>
<keyword id="KW-0106">Calcium</keyword>
<keyword id="KW-0130">Cell adhesion</keyword>
<keyword id="KW-1003">Cell membrane</keyword>
<keyword id="KW-0165">Cleavage on pair of basic residues</keyword>
<keyword id="KW-0217">Developmental protein</keyword>
<keyword id="KW-0221">Differentiation</keyword>
<keyword id="KW-1015">Disulfide bond</keyword>
<keyword id="KW-0325">Glycoprotein</keyword>
<keyword id="KW-0401">Integrin</keyword>
<keyword id="KW-0472">Membrane</keyword>
<keyword id="KW-0479">Metal-binding</keyword>
<keyword id="KW-0524">Neurogenesis</keyword>
<keyword id="KW-0675">Receptor</keyword>
<keyword id="KW-1185">Reference proteome</keyword>
<keyword id="KW-0677">Repeat</keyword>
<keyword id="KW-0732">Signal</keyword>
<keyword id="KW-0812">Transmembrane</keyword>
<keyword id="KW-1133">Transmembrane helix</keyword>
<gene>
    <name type="primary">Itga8</name>
</gene>
<organism>
    <name type="scientific">Mus musculus</name>
    <name type="common">Mouse</name>
    <dbReference type="NCBI Taxonomy" id="10090"/>
    <lineage>
        <taxon>Eukaryota</taxon>
        <taxon>Metazoa</taxon>
        <taxon>Chordata</taxon>
        <taxon>Craniata</taxon>
        <taxon>Vertebrata</taxon>
        <taxon>Euteleostomi</taxon>
        <taxon>Mammalia</taxon>
        <taxon>Eutheria</taxon>
        <taxon>Euarchontoglires</taxon>
        <taxon>Glires</taxon>
        <taxon>Rodentia</taxon>
        <taxon>Myomorpha</taxon>
        <taxon>Muroidea</taxon>
        <taxon>Muridae</taxon>
        <taxon>Murinae</taxon>
        <taxon>Mus</taxon>
        <taxon>Mus</taxon>
    </lineage>
</organism>
<dbReference type="EMBL" id="AK031326">
    <property type="protein sequence ID" value="BAC27348.1"/>
    <property type="molecule type" value="mRNA"/>
</dbReference>
<dbReference type="EMBL" id="AK044910">
    <property type="protein sequence ID" value="BAC32137.1"/>
    <property type="molecule type" value="mRNA"/>
</dbReference>
<dbReference type="EMBL" id="AK135193">
    <property type="protein sequence ID" value="BAE22455.1"/>
    <property type="molecule type" value="mRNA"/>
</dbReference>
<dbReference type="EMBL" id="AL845313">
    <property type="status" value="NOT_ANNOTATED_CDS"/>
    <property type="molecule type" value="Genomic_DNA"/>
</dbReference>
<dbReference type="EMBL" id="AF041409">
    <property type="protein sequence ID" value="AAC15665.1"/>
    <property type="molecule type" value="mRNA"/>
</dbReference>
<dbReference type="CCDS" id="CCDS15689.1">
    <molecule id="A2ARA8-1"/>
</dbReference>
<dbReference type="RefSeq" id="NP_001001309.1">
    <molecule id="A2ARA8-1"/>
    <property type="nucleotide sequence ID" value="NM_001001309.4"/>
</dbReference>
<dbReference type="SMR" id="A2ARA8"/>
<dbReference type="BioGRID" id="232293">
    <property type="interactions" value="2"/>
</dbReference>
<dbReference type="ComplexPortal" id="CPX-3122">
    <property type="entry name" value="Integrin alpha8-beta1 complex"/>
</dbReference>
<dbReference type="FunCoup" id="A2ARA8">
    <property type="interactions" value="663"/>
</dbReference>
<dbReference type="STRING" id="10090.ENSMUSP00000028106"/>
<dbReference type="GlyCosmos" id="A2ARA8">
    <property type="glycosylation" value="16 sites, No reported glycans"/>
</dbReference>
<dbReference type="GlyGen" id="A2ARA8">
    <property type="glycosylation" value="16 sites, 5 N-linked glycans (7 sites)"/>
</dbReference>
<dbReference type="iPTMnet" id="A2ARA8"/>
<dbReference type="PhosphoSitePlus" id="A2ARA8"/>
<dbReference type="SwissPalm" id="A2ARA8"/>
<dbReference type="PaxDb" id="10090-ENSMUSP00000028106"/>
<dbReference type="PeptideAtlas" id="A2ARA8"/>
<dbReference type="ProteomicsDB" id="268890">
    <molecule id="A2ARA8-1"/>
</dbReference>
<dbReference type="ProteomicsDB" id="268891">
    <molecule id="A2ARA8-2"/>
</dbReference>
<dbReference type="Pumba" id="A2ARA8"/>
<dbReference type="Antibodypedia" id="961">
    <property type="antibodies" value="211 antibodies from 29 providers"/>
</dbReference>
<dbReference type="DNASU" id="241226"/>
<dbReference type="Ensembl" id="ENSMUST00000028106.11">
    <molecule id="A2ARA8-1"/>
    <property type="protein sequence ID" value="ENSMUSP00000028106.5"/>
    <property type="gene ID" value="ENSMUSG00000026768.11"/>
</dbReference>
<dbReference type="GeneID" id="241226"/>
<dbReference type="KEGG" id="mmu:241226"/>
<dbReference type="UCSC" id="uc008ijk.1">
    <molecule id="A2ARA8-1"/>
    <property type="organism name" value="mouse"/>
</dbReference>
<dbReference type="UCSC" id="uc008ijl.1">
    <molecule id="A2ARA8-2"/>
    <property type="organism name" value="mouse"/>
</dbReference>
<dbReference type="AGR" id="MGI:109442"/>
<dbReference type="CTD" id="8516"/>
<dbReference type="MGI" id="MGI:109442">
    <property type="gene designation" value="Itga8"/>
</dbReference>
<dbReference type="VEuPathDB" id="HostDB:ENSMUSG00000026768"/>
<dbReference type="eggNOG" id="KOG3637">
    <property type="taxonomic scope" value="Eukaryota"/>
</dbReference>
<dbReference type="GeneTree" id="ENSGT00940000156737"/>
<dbReference type="HOGENOM" id="CLU_004111_4_0_1"/>
<dbReference type="InParanoid" id="A2ARA8"/>
<dbReference type="OMA" id="XMASYFG"/>
<dbReference type="OrthoDB" id="5317514at2759"/>
<dbReference type="PhylomeDB" id="A2ARA8"/>
<dbReference type="TreeFam" id="TF105391"/>
<dbReference type="Reactome" id="R-MMU-2129379">
    <property type="pathway name" value="Molecules associated with elastic fibres"/>
</dbReference>
<dbReference type="Reactome" id="R-MMU-216083">
    <property type="pathway name" value="Integrin cell surface interactions"/>
</dbReference>
<dbReference type="Reactome" id="R-MMU-2173789">
    <property type="pathway name" value="TGF-beta receptor signaling activates SMADs"/>
</dbReference>
<dbReference type="Reactome" id="R-MMU-3000178">
    <property type="pathway name" value="ECM proteoglycans"/>
</dbReference>
<dbReference type="BioGRID-ORCS" id="241226">
    <property type="hits" value="2 hits in 76 CRISPR screens"/>
</dbReference>
<dbReference type="ChiTaRS" id="Itga8">
    <property type="organism name" value="mouse"/>
</dbReference>
<dbReference type="PRO" id="PR:A2ARA8"/>
<dbReference type="Proteomes" id="UP000000589">
    <property type="component" value="Chromosome 2"/>
</dbReference>
<dbReference type="RNAct" id="A2ARA8">
    <property type="molecule type" value="protein"/>
</dbReference>
<dbReference type="Bgee" id="ENSMUSG00000026768">
    <property type="expression patterns" value="Expressed in ascending aorta and 189 other cell types or tissues"/>
</dbReference>
<dbReference type="ExpressionAtlas" id="A2ARA8">
    <property type="expression patterns" value="baseline and differential"/>
</dbReference>
<dbReference type="GO" id="GO:0045177">
    <property type="term" value="C:apical part of cell"/>
    <property type="evidence" value="ECO:0000314"/>
    <property type="project" value="MGI"/>
</dbReference>
<dbReference type="GO" id="GO:0009986">
    <property type="term" value="C:cell surface"/>
    <property type="evidence" value="ECO:0007669"/>
    <property type="project" value="Ensembl"/>
</dbReference>
<dbReference type="GO" id="GO:0032591">
    <property type="term" value="C:dendritic spine membrane"/>
    <property type="evidence" value="ECO:0007669"/>
    <property type="project" value="Ensembl"/>
</dbReference>
<dbReference type="GO" id="GO:0005783">
    <property type="term" value="C:endoplasmic reticulum"/>
    <property type="evidence" value="ECO:0007669"/>
    <property type="project" value="Ensembl"/>
</dbReference>
<dbReference type="GO" id="GO:0098978">
    <property type="term" value="C:glutamatergic synapse"/>
    <property type="evidence" value="ECO:0007669"/>
    <property type="project" value="Ensembl"/>
</dbReference>
<dbReference type="GO" id="GO:0008305">
    <property type="term" value="C:integrin complex"/>
    <property type="evidence" value="ECO:0007669"/>
    <property type="project" value="InterPro"/>
</dbReference>
<dbReference type="GO" id="GO:0043204">
    <property type="term" value="C:perikaryon"/>
    <property type="evidence" value="ECO:0007669"/>
    <property type="project" value="Ensembl"/>
</dbReference>
<dbReference type="GO" id="GO:0005886">
    <property type="term" value="C:plasma membrane"/>
    <property type="evidence" value="ECO:0000304"/>
    <property type="project" value="Reactome"/>
</dbReference>
<dbReference type="GO" id="GO:0098839">
    <property type="term" value="C:postsynaptic density membrane"/>
    <property type="evidence" value="ECO:0007669"/>
    <property type="project" value="Ensembl"/>
</dbReference>
<dbReference type="GO" id="GO:0046872">
    <property type="term" value="F:metal ion binding"/>
    <property type="evidence" value="ECO:0007669"/>
    <property type="project" value="UniProtKB-KW"/>
</dbReference>
<dbReference type="GO" id="GO:0030030">
    <property type="term" value="P:cell projection organization"/>
    <property type="evidence" value="ECO:0000315"/>
    <property type="project" value="MGI"/>
</dbReference>
<dbReference type="GO" id="GO:0007160">
    <property type="term" value="P:cell-matrix adhesion"/>
    <property type="evidence" value="ECO:0007669"/>
    <property type="project" value="Ensembl"/>
</dbReference>
<dbReference type="GO" id="GO:0045184">
    <property type="term" value="P:establishment of protein localization"/>
    <property type="evidence" value="ECO:0000315"/>
    <property type="project" value="BHF-UCL"/>
</dbReference>
<dbReference type="GO" id="GO:0030198">
    <property type="term" value="P:extracellular matrix organization"/>
    <property type="evidence" value="ECO:0000315"/>
    <property type="project" value="MGI"/>
</dbReference>
<dbReference type="GO" id="GO:0042472">
    <property type="term" value="P:inner ear morphogenesis"/>
    <property type="evidence" value="ECO:0000315"/>
    <property type="project" value="MGI"/>
</dbReference>
<dbReference type="GO" id="GO:0007229">
    <property type="term" value="P:integrin-mediated signaling pathway"/>
    <property type="evidence" value="ECO:0007669"/>
    <property type="project" value="UniProtKB-KW"/>
</dbReference>
<dbReference type="GO" id="GO:0007613">
    <property type="term" value="P:memory"/>
    <property type="evidence" value="ECO:0000315"/>
    <property type="project" value="MGI"/>
</dbReference>
<dbReference type="GO" id="GO:0048333">
    <property type="term" value="P:mesodermal cell differentiation"/>
    <property type="evidence" value="ECO:0007669"/>
    <property type="project" value="Ensembl"/>
</dbReference>
<dbReference type="GO" id="GO:0001656">
    <property type="term" value="P:metanephros development"/>
    <property type="evidence" value="ECO:0000315"/>
    <property type="project" value="MGI"/>
</dbReference>
<dbReference type="GO" id="GO:0007399">
    <property type="term" value="P:nervous system development"/>
    <property type="evidence" value="ECO:0007669"/>
    <property type="project" value="UniProtKB-KW"/>
</dbReference>
<dbReference type="GO" id="GO:0045944">
    <property type="term" value="P:positive regulation of transcription by RNA polymerase II"/>
    <property type="evidence" value="ECO:0000314"/>
    <property type="project" value="BHF-UCL"/>
</dbReference>
<dbReference type="GO" id="GO:0030511">
    <property type="term" value="P:positive regulation of transforming growth factor beta receptor signaling pathway"/>
    <property type="evidence" value="ECO:0000315"/>
    <property type="project" value="MGI"/>
</dbReference>
<dbReference type="GO" id="GO:0051145">
    <property type="term" value="P:smooth muscle cell differentiation"/>
    <property type="evidence" value="ECO:0000314"/>
    <property type="project" value="BHF-UCL"/>
</dbReference>
<dbReference type="GO" id="GO:0048745">
    <property type="term" value="P:smooth muscle tissue development"/>
    <property type="evidence" value="ECO:0000315"/>
    <property type="project" value="BHF-UCL"/>
</dbReference>
<dbReference type="GO" id="GO:0034446">
    <property type="term" value="P:substrate adhesion-dependent cell spreading"/>
    <property type="evidence" value="ECO:0007669"/>
    <property type="project" value="Ensembl"/>
</dbReference>
<dbReference type="GO" id="GO:0007179">
    <property type="term" value="P:transforming growth factor beta receptor signaling pathway"/>
    <property type="evidence" value="ECO:0000315"/>
    <property type="project" value="MGI"/>
</dbReference>
<dbReference type="FunFam" id="2.130.10.130:FF:000003">
    <property type="entry name" value="Integrin alpha V"/>
    <property type="match status" value="1"/>
</dbReference>
<dbReference type="FunFam" id="2.60.40.1510:FF:000001">
    <property type="entry name" value="Integrin alpha V"/>
    <property type="match status" value="1"/>
</dbReference>
<dbReference type="FunFam" id="1.20.5.930:FF:000001">
    <property type="entry name" value="Integrin subunit alpha V"/>
    <property type="match status" value="1"/>
</dbReference>
<dbReference type="FunFam" id="2.60.40.1530:FF:000012">
    <property type="entry name" value="Integrin, alpha 8"/>
    <property type="match status" value="1"/>
</dbReference>
<dbReference type="FunFam" id="2.60.40.1460:FF:000001">
    <property type="entry name" value="Integrin, alpha V"/>
    <property type="match status" value="1"/>
</dbReference>
<dbReference type="Gene3D" id="1.20.5.930">
    <property type="entry name" value="Bicelle-embedded integrin alpha(iib) transmembrane segment"/>
    <property type="match status" value="1"/>
</dbReference>
<dbReference type="Gene3D" id="2.130.10.130">
    <property type="entry name" value="Integrin alpha, N-terminal"/>
    <property type="match status" value="1"/>
</dbReference>
<dbReference type="Gene3D" id="2.60.40.1460">
    <property type="entry name" value="Integrin domains. Chain A, domain 2"/>
    <property type="match status" value="1"/>
</dbReference>
<dbReference type="Gene3D" id="2.60.40.1510">
    <property type="entry name" value="ntegrin, alpha v. Chain A, domain 3"/>
    <property type="match status" value="1"/>
</dbReference>
<dbReference type="Gene3D" id="2.60.40.1530">
    <property type="entry name" value="ntegrin, alpha v. Chain A, domain 4"/>
    <property type="match status" value="1"/>
</dbReference>
<dbReference type="InterPro" id="IPR013517">
    <property type="entry name" value="FG-GAP"/>
</dbReference>
<dbReference type="InterPro" id="IPR013519">
    <property type="entry name" value="Int_alpha_beta-p"/>
</dbReference>
<dbReference type="InterPro" id="IPR000413">
    <property type="entry name" value="Integrin_alpha"/>
</dbReference>
<dbReference type="InterPro" id="IPR018184">
    <property type="entry name" value="Integrin_alpha_C_CS"/>
</dbReference>
<dbReference type="InterPro" id="IPR013649">
    <property type="entry name" value="Integrin_alpha_Ig-like_1"/>
</dbReference>
<dbReference type="InterPro" id="IPR048285">
    <property type="entry name" value="Integrin_alpha_Ig-like_2"/>
</dbReference>
<dbReference type="InterPro" id="IPR048286">
    <property type="entry name" value="Integrin_alpha_Ig-like_3"/>
</dbReference>
<dbReference type="InterPro" id="IPR028994">
    <property type="entry name" value="Integrin_alpha_N"/>
</dbReference>
<dbReference type="InterPro" id="IPR032695">
    <property type="entry name" value="Integrin_dom_sf"/>
</dbReference>
<dbReference type="PANTHER" id="PTHR23220">
    <property type="entry name" value="INTEGRIN ALPHA"/>
    <property type="match status" value="1"/>
</dbReference>
<dbReference type="PANTHER" id="PTHR23220:SF5">
    <property type="entry name" value="INTEGRIN ALPHA-8"/>
    <property type="match status" value="1"/>
</dbReference>
<dbReference type="Pfam" id="PF01839">
    <property type="entry name" value="FG-GAP"/>
    <property type="match status" value="3"/>
</dbReference>
<dbReference type="Pfam" id="PF08441">
    <property type="entry name" value="Integrin_A_Ig_1"/>
    <property type="match status" value="1"/>
</dbReference>
<dbReference type="Pfam" id="PF20805">
    <property type="entry name" value="Integrin_A_Ig_2"/>
    <property type="match status" value="1"/>
</dbReference>
<dbReference type="Pfam" id="PF20806">
    <property type="entry name" value="Integrin_A_Ig_3"/>
    <property type="match status" value="1"/>
</dbReference>
<dbReference type="Pfam" id="PF00357">
    <property type="entry name" value="Integrin_alpha"/>
    <property type="match status" value="1"/>
</dbReference>
<dbReference type="PRINTS" id="PR01185">
    <property type="entry name" value="INTEGRINA"/>
</dbReference>
<dbReference type="SMART" id="SM00191">
    <property type="entry name" value="Int_alpha"/>
    <property type="match status" value="6"/>
</dbReference>
<dbReference type="SUPFAM" id="SSF69318">
    <property type="entry name" value="Integrin alpha N-terminal domain"/>
    <property type="match status" value="1"/>
</dbReference>
<dbReference type="SUPFAM" id="SSF69179">
    <property type="entry name" value="Integrin domains"/>
    <property type="match status" value="3"/>
</dbReference>
<dbReference type="PROSITE" id="PS51470">
    <property type="entry name" value="FG_GAP"/>
    <property type="match status" value="7"/>
</dbReference>
<dbReference type="PROSITE" id="PS00242">
    <property type="entry name" value="INTEGRIN_ALPHA"/>
    <property type="match status" value="1"/>
</dbReference>
<reference key="1">
    <citation type="journal article" date="2005" name="Science">
        <title>The transcriptional landscape of the mammalian genome.</title>
        <authorList>
            <person name="Carninci P."/>
            <person name="Kasukawa T."/>
            <person name="Katayama S."/>
            <person name="Gough J."/>
            <person name="Frith M.C."/>
            <person name="Maeda N."/>
            <person name="Oyama R."/>
            <person name="Ravasi T."/>
            <person name="Lenhard B."/>
            <person name="Wells C."/>
            <person name="Kodzius R."/>
            <person name="Shimokawa K."/>
            <person name="Bajic V.B."/>
            <person name="Brenner S.E."/>
            <person name="Batalov S."/>
            <person name="Forrest A.R."/>
            <person name="Zavolan M."/>
            <person name="Davis M.J."/>
            <person name="Wilming L.G."/>
            <person name="Aidinis V."/>
            <person name="Allen J.E."/>
            <person name="Ambesi-Impiombato A."/>
            <person name="Apweiler R."/>
            <person name="Aturaliya R.N."/>
            <person name="Bailey T.L."/>
            <person name="Bansal M."/>
            <person name="Baxter L."/>
            <person name="Beisel K.W."/>
            <person name="Bersano T."/>
            <person name="Bono H."/>
            <person name="Chalk A.M."/>
            <person name="Chiu K.P."/>
            <person name="Choudhary V."/>
            <person name="Christoffels A."/>
            <person name="Clutterbuck D.R."/>
            <person name="Crowe M.L."/>
            <person name="Dalla E."/>
            <person name="Dalrymple B.P."/>
            <person name="de Bono B."/>
            <person name="Della Gatta G."/>
            <person name="di Bernardo D."/>
            <person name="Down T."/>
            <person name="Engstrom P."/>
            <person name="Fagiolini M."/>
            <person name="Faulkner G."/>
            <person name="Fletcher C.F."/>
            <person name="Fukushima T."/>
            <person name="Furuno M."/>
            <person name="Futaki S."/>
            <person name="Gariboldi M."/>
            <person name="Georgii-Hemming P."/>
            <person name="Gingeras T.R."/>
            <person name="Gojobori T."/>
            <person name="Green R.E."/>
            <person name="Gustincich S."/>
            <person name="Harbers M."/>
            <person name="Hayashi Y."/>
            <person name="Hensch T.K."/>
            <person name="Hirokawa N."/>
            <person name="Hill D."/>
            <person name="Huminiecki L."/>
            <person name="Iacono M."/>
            <person name="Ikeo K."/>
            <person name="Iwama A."/>
            <person name="Ishikawa T."/>
            <person name="Jakt M."/>
            <person name="Kanapin A."/>
            <person name="Katoh M."/>
            <person name="Kawasawa Y."/>
            <person name="Kelso J."/>
            <person name="Kitamura H."/>
            <person name="Kitano H."/>
            <person name="Kollias G."/>
            <person name="Krishnan S.P."/>
            <person name="Kruger A."/>
            <person name="Kummerfeld S.K."/>
            <person name="Kurochkin I.V."/>
            <person name="Lareau L.F."/>
            <person name="Lazarevic D."/>
            <person name="Lipovich L."/>
            <person name="Liu J."/>
            <person name="Liuni S."/>
            <person name="McWilliam S."/>
            <person name="Madan Babu M."/>
            <person name="Madera M."/>
            <person name="Marchionni L."/>
            <person name="Matsuda H."/>
            <person name="Matsuzawa S."/>
            <person name="Miki H."/>
            <person name="Mignone F."/>
            <person name="Miyake S."/>
            <person name="Morris K."/>
            <person name="Mottagui-Tabar S."/>
            <person name="Mulder N."/>
            <person name="Nakano N."/>
            <person name="Nakauchi H."/>
            <person name="Ng P."/>
            <person name="Nilsson R."/>
            <person name="Nishiguchi S."/>
            <person name="Nishikawa S."/>
            <person name="Nori F."/>
            <person name="Ohara O."/>
            <person name="Okazaki Y."/>
            <person name="Orlando V."/>
            <person name="Pang K.C."/>
            <person name="Pavan W.J."/>
            <person name="Pavesi G."/>
            <person name="Pesole G."/>
            <person name="Petrovsky N."/>
            <person name="Piazza S."/>
            <person name="Reed J."/>
            <person name="Reid J.F."/>
            <person name="Ring B.Z."/>
            <person name="Ringwald M."/>
            <person name="Rost B."/>
            <person name="Ruan Y."/>
            <person name="Salzberg S.L."/>
            <person name="Sandelin A."/>
            <person name="Schneider C."/>
            <person name="Schoenbach C."/>
            <person name="Sekiguchi K."/>
            <person name="Semple C.A."/>
            <person name="Seno S."/>
            <person name="Sessa L."/>
            <person name="Sheng Y."/>
            <person name="Shibata Y."/>
            <person name="Shimada H."/>
            <person name="Shimada K."/>
            <person name="Silva D."/>
            <person name="Sinclair B."/>
            <person name="Sperling S."/>
            <person name="Stupka E."/>
            <person name="Sugiura K."/>
            <person name="Sultana R."/>
            <person name="Takenaka Y."/>
            <person name="Taki K."/>
            <person name="Tammoja K."/>
            <person name="Tan S.L."/>
            <person name="Tang S."/>
            <person name="Taylor M.S."/>
            <person name="Tegner J."/>
            <person name="Teichmann S.A."/>
            <person name="Ueda H.R."/>
            <person name="van Nimwegen E."/>
            <person name="Verardo R."/>
            <person name="Wei C.L."/>
            <person name="Yagi K."/>
            <person name="Yamanishi H."/>
            <person name="Zabarovsky E."/>
            <person name="Zhu S."/>
            <person name="Zimmer A."/>
            <person name="Hide W."/>
            <person name="Bult C."/>
            <person name="Grimmond S.M."/>
            <person name="Teasdale R.D."/>
            <person name="Liu E.T."/>
            <person name="Brusic V."/>
            <person name="Quackenbush J."/>
            <person name="Wahlestedt C."/>
            <person name="Mattick J.S."/>
            <person name="Hume D.A."/>
            <person name="Kai C."/>
            <person name="Sasaki D."/>
            <person name="Tomaru Y."/>
            <person name="Fukuda S."/>
            <person name="Kanamori-Katayama M."/>
            <person name="Suzuki M."/>
            <person name="Aoki J."/>
            <person name="Arakawa T."/>
            <person name="Iida J."/>
            <person name="Imamura K."/>
            <person name="Itoh M."/>
            <person name="Kato T."/>
            <person name="Kawaji H."/>
            <person name="Kawagashira N."/>
            <person name="Kawashima T."/>
            <person name="Kojima M."/>
            <person name="Kondo S."/>
            <person name="Konno H."/>
            <person name="Nakano K."/>
            <person name="Ninomiya N."/>
            <person name="Nishio T."/>
            <person name="Okada M."/>
            <person name="Plessy C."/>
            <person name="Shibata K."/>
            <person name="Shiraki T."/>
            <person name="Suzuki S."/>
            <person name="Tagami M."/>
            <person name="Waki K."/>
            <person name="Watahiki A."/>
            <person name="Okamura-Oho Y."/>
            <person name="Suzuki H."/>
            <person name="Kawai J."/>
            <person name="Hayashizaki Y."/>
        </authorList>
    </citation>
    <scope>NUCLEOTIDE SEQUENCE [LARGE SCALE MRNA] (ISOFORMS 1 AND 2)</scope>
    <source>
        <strain>C57BL/6J</strain>
        <tissue>Embryo</tissue>
        <tissue>Testis</tissue>
        <tissue>Wolffian duct</tissue>
    </source>
</reference>
<reference key="2">
    <citation type="journal article" date="2009" name="PLoS Biol.">
        <title>Lineage-specific biology revealed by a finished genome assembly of the mouse.</title>
        <authorList>
            <person name="Church D.M."/>
            <person name="Goodstadt L."/>
            <person name="Hillier L.W."/>
            <person name="Zody M.C."/>
            <person name="Goldstein S."/>
            <person name="She X."/>
            <person name="Bult C.J."/>
            <person name="Agarwala R."/>
            <person name="Cherry J.L."/>
            <person name="DiCuccio M."/>
            <person name="Hlavina W."/>
            <person name="Kapustin Y."/>
            <person name="Meric P."/>
            <person name="Maglott D."/>
            <person name="Birtle Z."/>
            <person name="Marques A.C."/>
            <person name="Graves T."/>
            <person name="Zhou S."/>
            <person name="Teague B."/>
            <person name="Potamousis K."/>
            <person name="Churas C."/>
            <person name="Place M."/>
            <person name="Herschleb J."/>
            <person name="Runnheim R."/>
            <person name="Forrest D."/>
            <person name="Amos-Landgraf J."/>
            <person name="Schwartz D.C."/>
            <person name="Cheng Z."/>
            <person name="Lindblad-Toh K."/>
            <person name="Eichler E.E."/>
            <person name="Ponting C.P."/>
        </authorList>
    </citation>
    <scope>NUCLEOTIDE SEQUENCE [LARGE SCALE GENOMIC DNA]</scope>
    <source>
        <strain>C57BL/6J</strain>
    </source>
</reference>
<reference key="3">
    <citation type="journal article" date="1997" name="Cell">
        <title>Integrin alpha8beta1 is critically important for epithelial-mesenchymal interactions during kidney morphogenesis.</title>
        <authorList>
            <person name="Mueller U."/>
            <person name="Wang D."/>
            <person name="Denda S."/>
            <person name="Meneses J.J."/>
            <person name="Pedersen R.A."/>
            <person name="Reichardt L.F."/>
        </authorList>
    </citation>
    <scope>NUCLEOTIDE SEQUENCE [MRNA] OF 45-1056 (ISOFORM 1)</scope>
    <scope>FUNCTION</scope>
    <scope>DISRUPTION PHENOTYPE</scope>
    <scope>DEVELOPMENTAL STAGE</scope>
    <source>
        <tissue>Fibroblast</tissue>
    </source>
</reference>
<reference key="4">
    <citation type="journal article" date="1998" name="Biochemistry">
        <title>Utilization of a soluble integrin-alkaline phosphatase chimera to characterize integrin alpha 8 beta 1 receptor interactions with tenascin: murine alpha 8 beta 1 binds to the RGD site in tenascin-C fragments, but not to native tenascin-C.</title>
        <authorList>
            <person name="Denda S."/>
            <person name="Mueller U."/>
            <person name="Crossin K.L."/>
            <person name="Erickson H.P."/>
            <person name="Reichardt L.F."/>
        </authorList>
    </citation>
    <scope>FUNCTION</scope>
</reference>
<reference key="5">
    <citation type="journal article" date="1998" name="Mol. Biol. Cell">
        <title>Identification of osteopontin as a novel ligand for the integrin alpha8 beta1 and potential roles for this integrin-ligand interaction in kidney morphogenesis.</title>
        <authorList>
            <person name="Denda S."/>
            <person name="Reichardt L.F."/>
            <person name="Mueller U."/>
        </authorList>
    </citation>
    <scope>FUNCTION</scope>
</reference>
<reference key="6">
    <citation type="journal article" date="1999" name="J. Neurosci.">
        <title>Integrin subunit gene expression is regionally differentiated in adult brain.</title>
        <authorList>
            <person name="Pinkstaff J.K."/>
            <person name="Detterich J."/>
            <person name="Lynch G."/>
            <person name="Gall C."/>
        </authorList>
    </citation>
    <scope>TISSUE SPECIFICITY</scope>
</reference>
<reference key="7">
    <citation type="journal article" date="1999" name="Kidney Int.">
        <title>Alpha8 integrin in glomerular mesangial cells and in experimental glomerulonephritis.</title>
        <authorList>
            <person name="Hartner A."/>
            <person name="Schoecklmann H."/>
            <person name="Proels F."/>
            <person name="Mueller U."/>
            <person name="Sterzel R.B."/>
        </authorList>
    </citation>
    <scope>TISSUE SPECIFICITY</scope>
</reference>
<reference key="8">
    <citation type="journal article" date="2000" name="Nat. Genet.">
        <title>Stereocilia defects in the sensory hair cells of the inner ear in mice deficient in integrin alpha8beta1.</title>
        <authorList>
            <person name="Littlewood Evans A."/>
            <person name="Mueller U."/>
        </authorList>
    </citation>
    <scope>FUNCTION</scope>
    <scope>DISRUPTION PHENOTYPE</scope>
    <scope>SUBCELLULAR LOCATION</scope>
</reference>
<reference key="9">
    <citation type="journal article" date="2001" name="J. Cell Biol.">
        <title>Identification and characterization of a novel extracellular matrix protein nephronectin that is associated with integrin alpha8beta1 in the embryonic kidney.</title>
        <authorList>
            <person name="Brandenberger R."/>
            <person name="Schmidt A."/>
            <person name="Linton J."/>
            <person name="Wang D."/>
            <person name="Backus C."/>
            <person name="Denda S."/>
            <person name="Mueller U."/>
            <person name="Reichardt L.F."/>
        </authorList>
    </citation>
    <scope>FUNCTION</scope>
</reference>
<reference key="10">
    <citation type="journal article" date="2002" name="Am. J. Pathol.">
        <title>The alpha8 integrin chain affords mechanical stability to the glomerular capillary tuft in hypertensive glomerular disease.</title>
        <authorList>
            <person name="Hartner A."/>
            <person name="Cordasic N."/>
            <person name="Klanke B."/>
            <person name="Mueller U."/>
            <person name="Sterzel R.B."/>
            <person name="Hilgers K.F."/>
        </authorList>
    </citation>
    <scope>FUNCTION</scope>
    <scope>DISRUPTION PHENOTYPE</scope>
</reference>
<reference key="11">
    <citation type="journal article" date="2003" name="J. Histochem. Cytochem.">
        <title>Expression of the integrin subunit alpha8 in murine lung development.</title>
        <authorList>
            <person name="Wagner T.E."/>
            <person name="Frevert C.W."/>
            <person name="Herzog E.L."/>
            <person name="Schnapp L.M."/>
        </authorList>
    </citation>
    <scope>DEVELOPMENTAL STAGE</scope>
</reference>
<reference key="12">
    <citation type="journal article" date="2003" name="Kidney Int.">
        <title>Role of alpha8 integrin in mesangial cell adhesion, migration, and proliferation.</title>
        <authorList>
            <person name="Bieritz B."/>
            <person name="Spessotto P."/>
            <person name="Colombatti A."/>
            <person name="Jahn A."/>
            <person name="Prols F."/>
            <person name="Hartner A."/>
        </authorList>
    </citation>
    <scope>FUNCTION</scope>
</reference>
<reference key="13">
    <citation type="journal article" date="2007" name="Development">
        <title>The ECM protein nephronectin promotes kidney development via integrin alpha8beta1-mediated stimulation of Gdnf expression.</title>
        <authorList>
            <person name="Linton J.M."/>
            <person name="Martin G.R."/>
            <person name="Reichardt L.F."/>
        </authorList>
    </citation>
    <scope>FUNCTION</scope>
    <scope>DISRUPTION PHENOTYPE</scope>
</reference>
<reference key="14">
    <citation type="journal article" date="2010" name="Cell">
        <title>A tissue-specific atlas of mouse protein phosphorylation and expression.</title>
        <authorList>
            <person name="Huttlin E.L."/>
            <person name="Jedrychowski M.P."/>
            <person name="Elias J.E."/>
            <person name="Goswami T."/>
            <person name="Rad R."/>
            <person name="Beausoleil S.A."/>
            <person name="Villen J."/>
            <person name="Haas W."/>
            <person name="Sowa M.E."/>
            <person name="Gygi S.P."/>
        </authorList>
    </citation>
    <scope>IDENTIFICATION BY MASS SPECTROMETRY [LARGE SCALE ANALYSIS]</scope>
    <source>
        <tissue>Kidney</tissue>
        <tissue>Lung</tissue>
        <tissue>Spleen</tissue>
    </source>
</reference>
<sequence>MSAGTHCGPPGNRAPPFARLCCVSAALGMLWSPACLAFNLDVDKLTVYSGPEGSYFGYSLDFYIPDARTASVLVGAPKANTSQPDIVEGGAVYYCPWPSERSAQCKQIPFDTTNNRKIRVNGTKEPIEFKSNQWFGATVRAHKGKVVACAPLYHWRTLKPNPAKDPVGTCYVAIQNFSAYAEHSPCRNSNADPEGQGYCQAGFSLDFYKNGDLIVGGPGSFYWQGQVITVSIADIIANYSFKDILRKLAAEKQTDVAPASYDDSYLGYSVAAGEFTGDSQQELVAGIPRGAQNFGYVSIINSTDMTFIQNFTGEQMASYFGYTVVVSDVNNDGMDDILVGAPLFMEREFESNPREVGQVYLYLQASALLFQDPQVLTGTETFGRFGSSVAHLGDLNQDGYNDIAIGVPFAGKDQRGKVLIYNGNPRGLHSKPSQVLQGIWGSQTIPSGFGFSLRGDADIDKNDYPDLLVGAFGKGKVAVYRARPVVTVDAQLLLHPMIINLENKTCQIPEFPTPVACFSVRVCASIAGQSISNTIALLAEVQLDFLKQKGAIKRTLFLHNHQSHFTFPFVMKQQKSLHCQDFMVYLRDETEFRDKLSPINISLNYSLDDSTFKDSLEVKPILNHYRDNVVTEQAHILVDCGEDNLCVPDLKLSARPDKHQIIIGDENHLMLIINARNEGEGAYEAELFVIIPEEADYVGIERNNKGLRPLSCEYKMENVTRMVVCDLGNPMVTGTNFSLGLRFAVPRLEKTNMSINFDLQIRSSNKDNPDSNFERVQINITAIAQVEIRGVSHPPQIVLPIHNWEPEKKPHKEEEVGPLVEHIYELHNIGPSTISDSILDVGWPFSARDEFLLYIFHLQTLGPLQCQTNPEINPQDIKPAASPEDTPELSAFLRNATIPHLVRKRDVPVVQLHRQSPARILNCTNIDCLQISCAVGRLGGGESAVLKVRSRLWAHTFLKRKNDHYALASLVSFEVKKMPYKEQPAKLPAGSTAVKTSVIWATPNVSFSIPLWVIILAILLGLLVLAILTLALWKCGFFDRARPPQDEMTDREQLTSDKTPEA</sequence>
<accession>A2ARA8</accession>
<accession>O70304</accession>
<accession>Q3UXV8</accession>
<accession>Q8BRG3</accession>
<accession>Q8C0H7</accession>
<proteinExistence type="evidence at protein level"/>
<comment type="function">
    <text evidence="7 8 9 10 12 13 14 15">Integrin alpha-8/beta-1 functions in the genesis of kidney and probably of other organs by regulating the recruitment of mesenchymal cells into epithelial structures. It recognizes the sequence R-G-D in a wide array of ligands including TNC, FN1, SPP1 TGFB1, TGFB3 and VTN. NPNT is probably its functional ligand in kidney genesis. Neuronal receptor for TNC it mediates cell-cell interactions and regulates neurite outgrowth of sensory and motor neurons.</text>
</comment>
<comment type="subunit">
    <text>Heterodimer of an alpha and a beta subunit. The alpha subunit is composed of a heavy and a light chain linked by a disulfide bond. Alpha-8 associates with beta-1.</text>
</comment>
<comment type="subcellular location">
    <subcellularLocation>
        <location evidence="7">Membrane</location>
        <topology evidence="7">Single-pass type I membrane protein</topology>
    </subcellularLocation>
    <subcellularLocation>
        <location evidence="1">Cell membrane</location>
    </subcellularLocation>
</comment>
<comment type="alternative products">
    <event type="alternative splicing"/>
    <isoform>
        <id>A2ARA8-1</id>
        <name>1</name>
        <sequence type="displayed"/>
    </isoform>
    <isoform>
        <id>A2ARA8-2</id>
        <name>2</name>
        <sequence type="described" ref="VSP_027364 VSP_027365"/>
    </isoform>
</comment>
<comment type="tissue specificity">
    <text evidence="5 6">In brain, expressed in deep cortex, hippocampal CA1, basolateral amygdala and striatum. In kidney, expressed in glomerular mesengium (at protein level).</text>
</comment>
<comment type="developmental stage">
    <text evidence="11 13">Expressed in mesenchymal cells of developing organs such as gut, lung, gonads and nephrogenic cord.</text>
</comment>
<comment type="disruption phenotype">
    <text evidence="7 9 12 13">Mice display renal agenesis and dysgenesis. This is associated with a reduced expression of Gdnf that is similarly found in mice lacking Npnt. Adult mice also display increased susceptibility to glomerular capillary destruction upon mechanical stress. Mice lacking Itga8 also have difficulty balancing associated with structural defects in the inner ear where utricular hair cells lack stereocilia.</text>
</comment>
<comment type="similarity">
    <text evidence="17">Belongs to the integrin alpha chain family.</text>
</comment>
<evidence type="ECO:0000250" key="1"/>
<evidence type="ECO:0000250" key="2">
    <source>
        <dbReference type="UniProtKB" id="P08648"/>
    </source>
</evidence>
<evidence type="ECO:0000255" key="3"/>
<evidence type="ECO:0000255" key="4">
    <source>
        <dbReference type="PROSITE-ProRule" id="PRU00803"/>
    </source>
</evidence>
<evidence type="ECO:0000269" key="5">
    <source>
    </source>
</evidence>
<evidence type="ECO:0000269" key="6">
    <source>
    </source>
</evidence>
<evidence type="ECO:0000269" key="7">
    <source>
    </source>
</evidence>
<evidence type="ECO:0000269" key="8">
    <source>
    </source>
</evidence>
<evidence type="ECO:0000269" key="9">
    <source>
    </source>
</evidence>
<evidence type="ECO:0000269" key="10">
    <source>
    </source>
</evidence>
<evidence type="ECO:0000269" key="11">
    <source>
    </source>
</evidence>
<evidence type="ECO:0000269" key="12">
    <source>
    </source>
</evidence>
<evidence type="ECO:0000269" key="13">
    <source>
    </source>
</evidence>
<evidence type="ECO:0000269" key="14">
    <source>
    </source>
</evidence>
<evidence type="ECO:0000269" key="15">
    <source>
    </source>
</evidence>
<evidence type="ECO:0000303" key="16">
    <source>
    </source>
</evidence>
<evidence type="ECO:0000305" key="17"/>